<organism>
    <name type="scientific">Herminiimonas arsenicoxydans</name>
    <dbReference type="NCBI Taxonomy" id="204773"/>
    <lineage>
        <taxon>Bacteria</taxon>
        <taxon>Pseudomonadati</taxon>
        <taxon>Pseudomonadota</taxon>
        <taxon>Betaproteobacteria</taxon>
        <taxon>Burkholderiales</taxon>
        <taxon>Oxalobacteraceae</taxon>
        <taxon>Herminiimonas</taxon>
    </lineage>
</organism>
<proteinExistence type="inferred from homology"/>
<sequence>MLQPARRKYRKEQKGRNTGISHSRGTAVSFGEFGLKAIGRGRITARQIEAARRAMTRHIKRGGRIWIRIFPDKPISNKPAEVRMGNGKGNPEYYVAEIQPGKMLYEMDGVDEALAREAFRLAAAKLPLLTTFVVRQVGQ</sequence>
<keyword id="KW-1185">Reference proteome</keyword>
<keyword id="KW-0687">Ribonucleoprotein</keyword>
<keyword id="KW-0689">Ribosomal protein</keyword>
<keyword id="KW-0694">RNA-binding</keyword>
<keyword id="KW-0699">rRNA-binding</keyword>
<keyword id="KW-0820">tRNA-binding</keyword>
<name>RL16_HERAR</name>
<feature type="chain" id="PRO_1000054634" description="Large ribosomal subunit protein uL16">
    <location>
        <begin position="1"/>
        <end position="139"/>
    </location>
</feature>
<feature type="region of interest" description="Disordered" evidence="2">
    <location>
        <begin position="1"/>
        <end position="23"/>
    </location>
</feature>
<feature type="compositionally biased region" description="Basic residues" evidence="2">
    <location>
        <begin position="1"/>
        <end position="13"/>
    </location>
</feature>
<reference key="1">
    <citation type="journal article" date="2007" name="PLoS Genet.">
        <title>A tale of two oxidation states: bacterial colonization of arsenic-rich environments.</title>
        <authorList>
            <person name="Muller D."/>
            <person name="Medigue C."/>
            <person name="Koechler S."/>
            <person name="Barbe V."/>
            <person name="Barakat M."/>
            <person name="Talla E."/>
            <person name="Bonnefoy V."/>
            <person name="Krin E."/>
            <person name="Arsene-Ploetze F."/>
            <person name="Carapito C."/>
            <person name="Chandler M."/>
            <person name="Cournoyer B."/>
            <person name="Cruveiller S."/>
            <person name="Dossat C."/>
            <person name="Duval S."/>
            <person name="Heymann M."/>
            <person name="Leize E."/>
            <person name="Lieutaud A."/>
            <person name="Lievremont D."/>
            <person name="Makita Y."/>
            <person name="Mangenot S."/>
            <person name="Nitschke W."/>
            <person name="Ortet P."/>
            <person name="Perdrial N."/>
            <person name="Schoepp B."/>
            <person name="Siguier P."/>
            <person name="Simeonova D.D."/>
            <person name="Rouy Z."/>
            <person name="Segurens B."/>
            <person name="Turlin E."/>
            <person name="Vallenet D."/>
            <person name="van Dorsselaer A."/>
            <person name="Weiss S."/>
            <person name="Weissenbach J."/>
            <person name="Lett M.-C."/>
            <person name="Danchin A."/>
            <person name="Bertin P.N."/>
        </authorList>
    </citation>
    <scope>NUCLEOTIDE SEQUENCE [LARGE SCALE GENOMIC DNA]</scope>
    <source>
        <strain>ULPAs1</strain>
    </source>
</reference>
<gene>
    <name evidence="1" type="primary">rplP</name>
    <name type="ordered locus">HEAR3159</name>
</gene>
<dbReference type="EMBL" id="CU207211">
    <property type="protein sequence ID" value="CAL63268.1"/>
    <property type="molecule type" value="Genomic_DNA"/>
</dbReference>
<dbReference type="SMR" id="A4G9T1"/>
<dbReference type="STRING" id="204773.HEAR3159"/>
<dbReference type="KEGG" id="har:HEAR3159"/>
<dbReference type="eggNOG" id="COG0197">
    <property type="taxonomic scope" value="Bacteria"/>
</dbReference>
<dbReference type="HOGENOM" id="CLU_078858_2_1_4"/>
<dbReference type="OrthoDB" id="9802589at2"/>
<dbReference type="Proteomes" id="UP000006697">
    <property type="component" value="Chromosome"/>
</dbReference>
<dbReference type="GO" id="GO:0022625">
    <property type="term" value="C:cytosolic large ribosomal subunit"/>
    <property type="evidence" value="ECO:0007669"/>
    <property type="project" value="TreeGrafter"/>
</dbReference>
<dbReference type="GO" id="GO:0019843">
    <property type="term" value="F:rRNA binding"/>
    <property type="evidence" value="ECO:0007669"/>
    <property type="project" value="UniProtKB-UniRule"/>
</dbReference>
<dbReference type="GO" id="GO:0003735">
    <property type="term" value="F:structural constituent of ribosome"/>
    <property type="evidence" value="ECO:0007669"/>
    <property type="project" value="InterPro"/>
</dbReference>
<dbReference type="GO" id="GO:0000049">
    <property type="term" value="F:tRNA binding"/>
    <property type="evidence" value="ECO:0007669"/>
    <property type="project" value="UniProtKB-KW"/>
</dbReference>
<dbReference type="GO" id="GO:0006412">
    <property type="term" value="P:translation"/>
    <property type="evidence" value="ECO:0007669"/>
    <property type="project" value="UniProtKB-UniRule"/>
</dbReference>
<dbReference type="CDD" id="cd01433">
    <property type="entry name" value="Ribosomal_L16_L10e"/>
    <property type="match status" value="1"/>
</dbReference>
<dbReference type="FunFam" id="3.90.1170.10:FF:000001">
    <property type="entry name" value="50S ribosomal protein L16"/>
    <property type="match status" value="1"/>
</dbReference>
<dbReference type="Gene3D" id="3.90.1170.10">
    <property type="entry name" value="Ribosomal protein L10e/L16"/>
    <property type="match status" value="1"/>
</dbReference>
<dbReference type="HAMAP" id="MF_01342">
    <property type="entry name" value="Ribosomal_uL16"/>
    <property type="match status" value="1"/>
</dbReference>
<dbReference type="InterPro" id="IPR047873">
    <property type="entry name" value="Ribosomal_uL16"/>
</dbReference>
<dbReference type="InterPro" id="IPR000114">
    <property type="entry name" value="Ribosomal_uL16_bact-type"/>
</dbReference>
<dbReference type="InterPro" id="IPR020798">
    <property type="entry name" value="Ribosomal_uL16_CS"/>
</dbReference>
<dbReference type="InterPro" id="IPR016180">
    <property type="entry name" value="Ribosomal_uL16_dom"/>
</dbReference>
<dbReference type="InterPro" id="IPR036920">
    <property type="entry name" value="Ribosomal_uL16_sf"/>
</dbReference>
<dbReference type="NCBIfam" id="TIGR01164">
    <property type="entry name" value="rplP_bact"/>
    <property type="match status" value="1"/>
</dbReference>
<dbReference type="PANTHER" id="PTHR12220">
    <property type="entry name" value="50S/60S RIBOSOMAL PROTEIN L16"/>
    <property type="match status" value="1"/>
</dbReference>
<dbReference type="PANTHER" id="PTHR12220:SF13">
    <property type="entry name" value="LARGE RIBOSOMAL SUBUNIT PROTEIN UL16M"/>
    <property type="match status" value="1"/>
</dbReference>
<dbReference type="Pfam" id="PF00252">
    <property type="entry name" value="Ribosomal_L16"/>
    <property type="match status" value="1"/>
</dbReference>
<dbReference type="PRINTS" id="PR00060">
    <property type="entry name" value="RIBOSOMALL16"/>
</dbReference>
<dbReference type="SUPFAM" id="SSF54686">
    <property type="entry name" value="Ribosomal protein L16p/L10e"/>
    <property type="match status" value="1"/>
</dbReference>
<dbReference type="PROSITE" id="PS00586">
    <property type="entry name" value="RIBOSOMAL_L16_1"/>
    <property type="match status" value="1"/>
</dbReference>
<evidence type="ECO:0000255" key="1">
    <source>
        <dbReference type="HAMAP-Rule" id="MF_01342"/>
    </source>
</evidence>
<evidence type="ECO:0000256" key="2">
    <source>
        <dbReference type="SAM" id="MobiDB-lite"/>
    </source>
</evidence>
<evidence type="ECO:0000305" key="3"/>
<protein>
    <recommendedName>
        <fullName evidence="1">Large ribosomal subunit protein uL16</fullName>
    </recommendedName>
    <alternativeName>
        <fullName evidence="3">50S ribosomal protein L16</fullName>
    </alternativeName>
</protein>
<comment type="function">
    <text evidence="1">Binds 23S rRNA and is also seen to make contacts with the A and possibly P site tRNAs.</text>
</comment>
<comment type="subunit">
    <text evidence="1">Part of the 50S ribosomal subunit.</text>
</comment>
<comment type="similarity">
    <text evidence="1">Belongs to the universal ribosomal protein uL16 family.</text>
</comment>
<accession>A4G9T1</accession>